<reference key="1">
    <citation type="journal article" date="1995" name="J. Bacteriol.">
        <title>An Escherichia coli chromosomal ars operon homolog is functional in arsenic detoxification and is conserved in Gram-negative bacteria.</title>
        <authorList>
            <person name="Diorio C."/>
            <person name="Cai J."/>
            <person name="Marmor J."/>
            <person name="Shinder R."/>
            <person name="Dubow M.S."/>
        </authorList>
    </citation>
    <scope>NUCLEOTIDE SEQUENCE [GENOMIC DNA]</scope>
    <scope>INDUCTION</scope>
    <source>
        <strain>K12</strain>
    </source>
</reference>
<reference key="2">
    <citation type="journal article" date="1994" name="Nucleic Acids Res.">
        <title>Analysis of the Escherichia coli genome. V. DNA sequence of the region from 76.0 to 81.5 minutes.</title>
        <authorList>
            <person name="Sofia H.J."/>
            <person name="Burland V."/>
            <person name="Daniels D.L."/>
            <person name="Plunkett G. III"/>
            <person name="Blattner F.R."/>
        </authorList>
    </citation>
    <scope>NUCLEOTIDE SEQUENCE [LARGE SCALE GENOMIC DNA]</scope>
    <source>
        <strain>K12 / MG1655 / ATCC 47076</strain>
    </source>
</reference>
<reference key="3">
    <citation type="journal article" date="1997" name="Science">
        <title>The complete genome sequence of Escherichia coli K-12.</title>
        <authorList>
            <person name="Blattner F.R."/>
            <person name="Plunkett G. III"/>
            <person name="Bloch C.A."/>
            <person name="Perna N.T."/>
            <person name="Burland V."/>
            <person name="Riley M."/>
            <person name="Collado-Vides J."/>
            <person name="Glasner J.D."/>
            <person name="Rode C.K."/>
            <person name="Mayhew G.F."/>
            <person name="Gregor J."/>
            <person name="Davis N.W."/>
            <person name="Kirkpatrick H.A."/>
            <person name="Goeden M.A."/>
            <person name="Rose D.J."/>
            <person name="Mau B."/>
            <person name="Shao Y."/>
        </authorList>
    </citation>
    <scope>NUCLEOTIDE SEQUENCE [LARGE SCALE GENOMIC DNA]</scope>
    <source>
        <strain>K12 / MG1655 / ATCC 47076</strain>
    </source>
</reference>
<reference key="4">
    <citation type="journal article" date="2006" name="Mol. Syst. Biol.">
        <title>Highly accurate genome sequences of Escherichia coli K-12 strains MG1655 and W3110.</title>
        <authorList>
            <person name="Hayashi K."/>
            <person name="Morooka N."/>
            <person name="Yamamoto Y."/>
            <person name="Fujita K."/>
            <person name="Isono K."/>
            <person name="Choi S."/>
            <person name="Ohtsubo E."/>
            <person name="Baba T."/>
            <person name="Wanner B.L."/>
            <person name="Mori H."/>
            <person name="Horiuchi T."/>
        </authorList>
    </citation>
    <scope>NUCLEOTIDE SEQUENCE [LARGE SCALE GENOMIC DNA]</scope>
    <source>
        <strain>K12 / W3110 / ATCC 27325 / DSM 5911</strain>
    </source>
</reference>
<accession>P0AB96</accession>
<accession>P37311</accession>
<accession>Q2M7G5</accession>
<organism>
    <name type="scientific">Escherichia coli (strain K12)</name>
    <dbReference type="NCBI Taxonomy" id="83333"/>
    <lineage>
        <taxon>Bacteria</taxon>
        <taxon>Pseudomonadati</taxon>
        <taxon>Pseudomonadota</taxon>
        <taxon>Gammaproteobacteria</taxon>
        <taxon>Enterobacterales</taxon>
        <taxon>Enterobacteriaceae</taxon>
        <taxon>Escherichia</taxon>
    </lineage>
</organism>
<evidence type="ECO:0000250" key="1">
    <source>
        <dbReference type="UniProtKB" id="P08692"/>
    </source>
</evidence>
<evidence type="ECO:0000255" key="2">
    <source>
        <dbReference type="PROSITE-ProRule" id="PRU01282"/>
    </source>
</evidence>
<evidence type="ECO:0000269" key="3">
    <source>
    </source>
</evidence>
<evidence type="ECO:0000303" key="4">
    <source>
    </source>
</evidence>
<evidence type="ECO:0000305" key="5"/>
<keyword id="KW-0059">Arsenical resistance</keyword>
<keyword id="KW-0560">Oxidoreductase</keyword>
<keyword id="KW-1185">Reference proteome</keyword>
<sequence>MSNITIYHNPACGTSRNTLEMIRNSGTEPTIIHYLETPPTRDELVKLIADMGISVRALLRKNVEPYEELGLAEDKFTDDRLIDFMLQHPILINRPIVVTPLGTRLCRPSEVVLEILPDAQKGAFSKEDGEKVVDEAGKRLK</sequence>
<name>ARSC_ECOLI</name>
<gene>
    <name evidence="4" type="primary">arsC</name>
    <name type="synonym">arsG</name>
    <name type="ordered locus">b3503</name>
    <name type="ordered locus">JW3470</name>
</gene>
<protein>
    <recommendedName>
        <fullName>Arsenate reductase</fullName>
        <ecNumber evidence="1">1.20.4.1</ecNumber>
    </recommendedName>
    <alternativeName>
        <fullName>Arsenical pump modifier</fullName>
    </alternativeName>
</protein>
<proteinExistence type="evidence at transcript level"/>
<dbReference type="EC" id="1.20.4.1" evidence="1"/>
<dbReference type="EMBL" id="X80057">
    <property type="protein sequence ID" value="CAA56363.1"/>
    <property type="molecule type" value="Genomic_DNA"/>
</dbReference>
<dbReference type="EMBL" id="U00039">
    <property type="protein sequence ID" value="AAB18479.1"/>
    <property type="molecule type" value="Genomic_DNA"/>
</dbReference>
<dbReference type="EMBL" id="U00096">
    <property type="protein sequence ID" value="AAC76528.1"/>
    <property type="molecule type" value="Genomic_DNA"/>
</dbReference>
<dbReference type="EMBL" id="AP009048">
    <property type="protein sequence ID" value="BAE77791.1"/>
    <property type="molecule type" value="Genomic_DNA"/>
</dbReference>
<dbReference type="PIR" id="C56269">
    <property type="entry name" value="C56269"/>
</dbReference>
<dbReference type="RefSeq" id="NP_417960.1">
    <property type="nucleotide sequence ID" value="NC_000913.3"/>
</dbReference>
<dbReference type="RefSeq" id="WP_000065769.1">
    <property type="nucleotide sequence ID" value="NZ_SSZK01000042.1"/>
</dbReference>
<dbReference type="SMR" id="P0AB96"/>
<dbReference type="BioGRID" id="4261140">
    <property type="interactions" value="9"/>
</dbReference>
<dbReference type="FunCoup" id="P0AB96">
    <property type="interactions" value="234"/>
</dbReference>
<dbReference type="IntAct" id="P0AB96">
    <property type="interactions" value="2"/>
</dbReference>
<dbReference type="STRING" id="511145.b3503"/>
<dbReference type="jPOST" id="P0AB96"/>
<dbReference type="PaxDb" id="511145-b3503"/>
<dbReference type="EnsemblBacteria" id="AAC76528">
    <property type="protein sequence ID" value="AAC76528"/>
    <property type="gene ID" value="b3503"/>
</dbReference>
<dbReference type="GeneID" id="93778489"/>
<dbReference type="GeneID" id="948018"/>
<dbReference type="KEGG" id="ecj:JW3470"/>
<dbReference type="KEGG" id="eco:b3503"/>
<dbReference type="KEGG" id="ecoc:C3026_18975"/>
<dbReference type="PATRIC" id="fig|1411691.4.peg.3217"/>
<dbReference type="EchoBASE" id="EB2149"/>
<dbReference type="eggNOG" id="COG1393">
    <property type="taxonomic scope" value="Bacteria"/>
</dbReference>
<dbReference type="HOGENOM" id="CLU_116644_0_0_6"/>
<dbReference type="InParanoid" id="P0AB96"/>
<dbReference type="OMA" id="VCSPKGV"/>
<dbReference type="OrthoDB" id="9790554at2"/>
<dbReference type="PhylomeDB" id="P0AB96"/>
<dbReference type="BioCyc" id="EcoCyc:EG12237-MONOMER"/>
<dbReference type="PRO" id="PR:P0AB96"/>
<dbReference type="Proteomes" id="UP000000625">
    <property type="component" value="Chromosome"/>
</dbReference>
<dbReference type="GO" id="GO:0008794">
    <property type="term" value="F:arsenate reductase (glutaredoxin) activity"/>
    <property type="evidence" value="ECO:0000250"/>
    <property type="project" value="EcoCyc"/>
</dbReference>
<dbReference type="GO" id="GO:0006974">
    <property type="term" value="P:DNA damage response"/>
    <property type="evidence" value="ECO:0000270"/>
    <property type="project" value="EcoliWiki"/>
</dbReference>
<dbReference type="GO" id="GO:0046685">
    <property type="term" value="P:response to arsenic-containing substance"/>
    <property type="evidence" value="ECO:0000315"/>
    <property type="project" value="EcoCyc"/>
</dbReference>
<dbReference type="CDD" id="cd03034">
    <property type="entry name" value="ArsC_ArsC"/>
    <property type="match status" value="1"/>
</dbReference>
<dbReference type="FunFam" id="3.40.30.10:FF:000048">
    <property type="entry name" value="Arsenate reductase"/>
    <property type="match status" value="1"/>
</dbReference>
<dbReference type="Gene3D" id="3.40.30.10">
    <property type="entry name" value="Glutaredoxin"/>
    <property type="match status" value="1"/>
</dbReference>
<dbReference type="InterPro" id="IPR006659">
    <property type="entry name" value="Arsenate_reductase"/>
</dbReference>
<dbReference type="InterPro" id="IPR006660">
    <property type="entry name" value="Arsenate_reductase-like"/>
</dbReference>
<dbReference type="InterPro" id="IPR036249">
    <property type="entry name" value="Thioredoxin-like_sf"/>
</dbReference>
<dbReference type="NCBIfam" id="TIGR00014">
    <property type="entry name" value="arsC"/>
    <property type="match status" value="1"/>
</dbReference>
<dbReference type="NCBIfam" id="NF007456">
    <property type="entry name" value="PRK10026.1"/>
    <property type="match status" value="1"/>
</dbReference>
<dbReference type="PANTHER" id="PTHR30041">
    <property type="entry name" value="ARSENATE REDUCTASE"/>
    <property type="match status" value="1"/>
</dbReference>
<dbReference type="PANTHER" id="PTHR30041:SF5">
    <property type="entry name" value="ARSENATE REDUCTASE-RELATED"/>
    <property type="match status" value="1"/>
</dbReference>
<dbReference type="Pfam" id="PF03960">
    <property type="entry name" value="ArsC"/>
    <property type="match status" value="1"/>
</dbReference>
<dbReference type="SUPFAM" id="SSF52833">
    <property type="entry name" value="Thioredoxin-like"/>
    <property type="match status" value="1"/>
</dbReference>
<dbReference type="PROSITE" id="PS51353">
    <property type="entry name" value="ARSC"/>
    <property type="match status" value="1"/>
</dbReference>
<feature type="chain" id="PRO_0000162536" description="Arsenate reductase">
    <location>
        <begin position="1"/>
        <end position="141"/>
    </location>
</feature>
<feature type="active site" description="Nucleophile; cysteine thioarsenate intermediate" evidence="1 2">
    <location>
        <position position="12"/>
    </location>
</feature>
<feature type="site" description="Important for activity" evidence="1">
    <location>
        <position position="8"/>
    </location>
</feature>
<feature type="site" description="Important for activity" evidence="1">
    <location>
        <position position="60"/>
    </location>
</feature>
<feature type="site" description="Important for activity" evidence="1">
    <location>
        <position position="94"/>
    </location>
</feature>
<feature type="site" description="Important for activity" evidence="1">
    <location>
        <position position="107"/>
    </location>
</feature>
<comment type="function">
    <text evidence="1">Involved in resistance to arsenate. Catalyzes the reduction of arsenate [As(V)] to arsenite [As(III)].</text>
</comment>
<comment type="catalytic activity">
    <reaction evidence="1">
        <text>[glutaredoxin]-dithiol + arsenate + glutathione + H(+) = glutathionyl-S-S-[glutaredoxin] + arsenite + H2O</text>
        <dbReference type="Rhea" id="RHEA:22016"/>
        <dbReference type="Rhea" id="RHEA-COMP:10729"/>
        <dbReference type="Rhea" id="RHEA-COMP:17668"/>
        <dbReference type="ChEBI" id="CHEBI:15377"/>
        <dbReference type="ChEBI" id="CHEBI:15378"/>
        <dbReference type="ChEBI" id="CHEBI:29242"/>
        <dbReference type="ChEBI" id="CHEBI:29950"/>
        <dbReference type="ChEBI" id="CHEBI:48597"/>
        <dbReference type="ChEBI" id="CHEBI:57925"/>
        <dbReference type="ChEBI" id="CHEBI:146199"/>
        <dbReference type="EC" id="1.20.4.1"/>
    </reaction>
</comment>
<comment type="induction">
    <text evidence="3">Induced by sodium arsenite.</text>
</comment>
<comment type="similarity">
    <text evidence="5">Belongs to the ArsC family.</text>
</comment>